<reference key="1">
    <citation type="journal article" date="2010" name="Stand. Genomic Sci.">
        <title>Complete genome sequence of Rhizobium leguminosarum bv trifolii strain WSM2304, an effective microsymbiont of the South American clover Trifolium polymorphum.</title>
        <authorList>
            <person name="Reeve W."/>
            <person name="O'Hara G."/>
            <person name="Chain P."/>
            <person name="Ardley J."/>
            <person name="Brau L."/>
            <person name="Nandesena K."/>
            <person name="Tiwari R."/>
            <person name="Malfatti S."/>
            <person name="Kiss H."/>
            <person name="Lapidus A."/>
            <person name="Copeland A."/>
            <person name="Nolan M."/>
            <person name="Land M."/>
            <person name="Ivanova N."/>
            <person name="Mavromatis K."/>
            <person name="Markowitz V."/>
            <person name="Kyrpides N."/>
            <person name="Melino V."/>
            <person name="Denton M."/>
            <person name="Yates R."/>
            <person name="Howieson J."/>
        </authorList>
    </citation>
    <scope>NUCLEOTIDE SEQUENCE [LARGE SCALE GENOMIC DNA]</scope>
    <source>
        <strain>WSM2304</strain>
    </source>
</reference>
<comment type="catalytic activity">
    <reaction evidence="1">
        <text>L-glutamine + H2O = L-glutamate + NH4(+)</text>
        <dbReference type="Rhea" id="RHEA:15889"/>
        <dbReference type="ChEBI" id="CHEBI:15377"/>
        <dbReference type="ChEBI" id="CHEBI:28938"/>
        <dbReference type="ChEBI" id="CHEBI:29985"/>
        <dbReference type="ChEBI" id="CHEBI:58359"/>
        <dbReference type="EC" id="3.5.1.2"/>
    </reaction>
</comment>
<comment type="subunit">
    <text evidence="1">Homotetramer.</text>
</comment>
<comment type="similarity">
    <text evidence="1">Belongs to the glutaminase family.</text>
</comment>
<name>GLSA_RHILW</name>
<protein>
    <recommendedName>
        <fullName evidence="1">Glutaminase</fullName>
        <ecNumber evidence="1">3.5.1.2</ecNumber>
    </recommendedName>
</protein>
<gene>
    <name evidence="1" type="primary">glsA</name>
    <name type="ordered locus">Rleg2_1946</name>
</gene>
<evidence type="ECO:0000255" key="1">
    <source>
        <dbReference type="HAMAP-Rule" id="MF_00313"/>
    </source>
</evidence>
<keyword id="KW-0378">Hydrolase</keyword>
<keyword id="KW-1185">Reference proteome</keyword>
<sequence length="309" mass="32977">MADLQAILDSIHTDILPRIGEGKVADYIPELAKVDPRQFGMAIVTVDGKVYRVGDADIAFSIQSISKVFMLTLALGKVGESLWKRVGREPSGSAFNSIVQLEHEGGIPRNPFINAGAIAVSDVVMAGHAPREAIGELLRFVRYLADDESITIDDKVARSETQTGYRNVALANFMRAYRNLDHPVDHVLGVYFHQCALSMSCEQLARAGLFLAARGSNPMTGHSVVSPKRARRINALMLTCGHYDGSGDFAYHVGLPGKSGVGGGIFAVAPGIASIAVWSPGLNKVGNSQLGAVALEMLAARTGWSVFGD</sequence>
<proteinExistence type="inferred from homology"/>
<accession>B5ZRF0</accession>
<feature type="chain" id="PRO_1000115702" description="Glutaminase">
    <location>
        <begin position="1"/>
        <end position="309"/>
    </location>
</feature>
<feature type="binding site" evidence="1">
    <location>
        <position position="64"/>
    </location>
    <ligand>
        <name>substrate</name>
    </ligand>
</feature>
<feature type="binding site" evidence="1">
    <location>
        <position position="114"/>
    </location>
    <ligand>
        <name>substrate</name>
    </ligand>
</feature>
<feature type="binding site" evidence="1">
    <location>
        <position position="160"/>
    </location>
    <ligand>
        <name>substrate</name>
    </ligand>
</feature>
<feature type="binding site" evidence="1">
    <location>
        <position position="167"/>
    </location>
    <ligand>
        <name>substrate</name>
    </ligand>
</feature>
<feature type="binding site" evidence="1">
    <location>
        <position position="191"/>
    </location>
    <ligand>
        <name>substrate</name>
    </ligand>
</feature>
<feature type="binding site" evidence="1">
    <location>
        <position position="243"/>
    </location>
    <ligand>
        <name>substrate</name>
    </ligand>
</feature>
<feature type="binding site" evidence="1">
    <location>
        <position position="261"/>
    </location>
    <ligand>
        <name>substrate</name>
    </ligand>
</feature>
<dbReference type="EC" id="3.5.1.2" evidence="1"/>
<dbReference type="EMBL" id="CP001191">
    <property type="protein sequence ID" value="ACI55231.1"/>
    <property type="molecule type" value="Genomic_DNA"/>
</dbReference>
<dbReference type="RefSeq" id="WP_003586217.1">
    <property type="nucleotide sequence ID" value="NC_011369.1"/>
</dbReference>
<dbReference type="SMR" id="B5ZRF0"/>
<dbReference type="STRING" id="395492.Rleg2_1946"/>
<dbReference type="KEGG" id="rlt:Rleg2_1946"/>
<dbReference type="eggNOG" id="COG2066">
    <property type="taxonomic scope" value="Bacteria"/>
</dbReference>
<dbReference type="HOGENOM" id="CLU_027932_1_1_5"/>
<dbReference type="Proteomes" id="UP000008330">
    <property type="component" value="Chromosome"/>
</dbReference>
<dbReference type="GO" id="GO:0004359">
    <property type="term" value="F:glutaminase activity"/>
    <property type="evidence" value="ECO:0007669"/>
    <property type="project" value="UniProtKB-UniRule"/>
</dbReference>
<dbReference type="GO" id="GO:0006537">
    <property type="term" value="P:glutamate biosynthetic process"/>
    <property type="evidence" value="ECO:0007669"/>
    <property type="project" value="TreeGrafter"/>
</dbReference>
<dbReference type="GO" id="GO:0006543">
    <property type="term" value="P:glutamine catabolic process"/>
    <property type="evidence" value="ECO:0007669"/>
    <property type="project" value="TreeGrafter"/>
</dbReference>
<dbReference type="FunFam" id="3.40.710.10:FF:000005">
    <property type="entry name" value="Glutaminase"/>
    <property type="match status" value="1"/>
</dbReference>
<dbReference type="Gene3D" id="3.40.710.10">
    <property type="entry name" value="DD-peptidase/beta-lactamase superfamily"/>
    <property type="match status" value="1"/>
</dbReference>
<dbReference type="HAMAP" id="MF_00313">
    <property type="entry name" value="Glutaminase"/>
    <property type="match status" value="1"/>
</dbReference>
<dbReference type="InterPro" id="IPR012338">
    <property type="entry name" value="Beta-lactam/transpept-like"/>
</dbReference>
<dbReference type="InterPro" id="IPR015868">
    <property type="entry name" value="Glutaminase"/>
</dbReference>
<dbReference type="NCBIfam" id="TIGR03814">
    <property type="entry name" value="Gln_ase"/>
    <property type="match status" value="1"/>
</dbReference>
<dbReference type="NCBIfam" id="NF002132">
    <property type="entry name" value="PRK00971.1-1"/>
    <property type="match status" value="1"/>
</dbReference>
<dbReference type="NCBIfam" id="NF002133">
    <property type="entry name" value="PRK00971.1-2"/>
    <property type="match status" value="1"/>
</dbReference>
<dbReference type="PANTHER" id="PTHR12544">
    <property type="entry name" value="GLUTAMINASE"/>
    <property type="match status" value="1"/>
</dbReference>
<dbReference type="PANTHER" id="PTHR12544:SF29">
    <property type="entry name" value="GLUTAMINASE"/>
    <property type="match status" value="1"/>
</dbReference>
<dbReference type="Pfam" id="PF04960">
    <property type="entry name" value="Glutaminase"/>
    <property type="match status" value="1"/>
</dbReference>
<dbReference type="SUPFAM" id="SSF56601">
    <property type="entry name" value="beta-lactamase/transpeptidase-like"/>
    <property type="match status" value="1"/>
</dbReference>
<organism>
    <name type="scientific">Rhizobium leguminosarum bv. trifolii (strain WSM2304)</name>
    <dbReference type="NCBI Taxonomy" id="395492"/>
    <lineage>
        <taxon>Bacteria</taxon>
        <taxon>Pseudomonadati</taxon>
        <taxon>Pseudomonadota</taxon>
        <taxon>Alphaproteobacteria</taxon>
        <taxon>Hyphomicrobiales</taxon>
        <taxon>Rhizobiaceae</taxon>
        <taxon>Rhizobium/Agrobacterium group</taxon>
        <taxon>Rhizobium</taxon>
    </lineage>
</organism>